<organism>
    <name type="scientific">Dechloromonas aromatica (strain RCB)</name>
    <dbReference type="NCBI Taxonomy" id="159087"/>
    <lineage>
        <taxon>Bacteria</taxon>
        <taxon>Pseudomonadati</taxon>
        <taxon>Pseudomonadota</taxon>
        <taxon>Betaproteobacteria</taxon>
        <taxon>Rhodocyclales</taxon>
        <taxon>Azonexaceae</taxon>
        <taxon>Dechloromonas</taxon>
    </lineage>
</organism>
<comment type="function">
    <text evidence="1">Catalyzes the conversion of dihydroorotate to orotate with quinone as electron acceptor.</text>
</comment>
<comment type="catalytic activity">
    <reaction evidence="1">
        <text>(S)-dihydroorotate + a quinone = orotate + a quinol</text>
        <dbReference type="Rhea" id="RHEA:30187"/>
        <dbReference type="ChEBI" id="CHEBI:24646"/>
        <dbReference type="ChEBI" id="CHEBI:30839"/>
        <dbReference type="ChEBI" id="CHEBI:30864"/>
        <dbReference type="ChEBI" id="CHEBI:132124"/>
        <dbReference type="EC" id="1.3.5.2"/>
    </reaction>
</comment>
<comment type="cofactor">
    <cofactor evidence="1">
        <name>FMN</name>
        <dbReference type="ChEBI" id="CHEBI:58210"/>
    </cofactor>
    <text evidence="1">Binds 1 FMN per subunit.</text>
</comment>
<comment type="pathway">
    <text evidence="1">Pyrimidine metabolism; UMP biosynthesis via de novo pathway; orotate from (S)-dihydroorotate (quinone route): step 1/1.</text>
</comment>
<comment type="subunit">
    <text evidence="1">Monomer.</text>
</comment>
<comment type="subcellular location">
    <subcellularLocation>
        <location evidence="1">Cell membrane</location>
        <topology evidence="1">Peripheral membrane protein</topology>
    </subcellularLocation>
</comment>
<comment type="similarity">
    <text evidence="1">Belongs to the dihydroorotate dehydrogenase family. Type 2 subfamily.</text>
</comment>
<feature type="chain" id="PRO_1000024169" description="Dihydroorotate dehydrogenase (quinone)">
    <location>
        <begin position="1"/>
        <end position="347"/>
    </location>
</feature>
<feature type="active site" description="Nucleophile" evidence="1">
    <location>
        <position position="178"/>
    </location>
</feature>
<feature type="binding site" evidence="1">
    <location>
        <begin position="62"/>
        <end position="66"/>
    </location>
    <ligand>
        <name>FMN</name>
        <dbReference type="ChEBI" id="CHEBI:58210"/>
    </ligand>
</feature>
<feature type="binding site" evidence="1">
    <location>
        <position position="66"/>
    </location>
    <ligand>
        <name>substrate</name>
    </ligand>
</feature>
<feature type="binding site" evidence="1">
    <location>
        <position position="86"/>
    </location>
    <ligand>
        <name>FMN</name>
        <dbReference type="ChEBI" id="CHEBI:58210"/>
    </ligand>
</feature>
<feature type="binding site" evidence="1">
    <location>
        <begin position="111"/>
        <end position="115"/>
    </location>
    <ligand>
        <name>substrate</name>
    </ligand>
</feature>
<feature type="binding site" evidence="1">
    <location>
        <position position="142"/>
    </location>
    <ligand>
        <name>FMN</name>
        <dbReference type="ChEBI" id="CHEBI:58210"/>
    </ligand>
</feature>
<feature type="binding site" evidence="1">
    <location>
        <position position="175"/>
    </location>
    <ligand>
        <name>FMN</name>
        <dbReference type="ChEBI" id="CHEBI:58210"/>
    </ligand>
</feature>
<feature type="binding site" evidence="1">
    <location>
        <position position="175"/>
    </location>
    <ligand>
        <name>substrate</name>
    </ligand>
</feature>
<feature type="binding site" evidence="1">
    <location>
        <position position="180"/>
    </location>
    <ligand>
        <name>substrate</name>
    </ligand>
</feature>
<feature type="binding site" evidence="1">
    <location>
        <position position="220"/>
    </location>
    <ligand>
        <name>FMN</name>
        <dbReference type="ChEBI" id="CHEBI:58210"/>
    </ligand>
</feature>
<feature type="binding site" evidence="1">
    <location>
        <position position="248"/>
    </location>
    <ligand>
        <name>FMN</name>
        <dbReference type="ChEBI" id="CHEBI:58210"/>
    </ligand>
</feature>
<feature type="binding site" evidence="1">
    <location>
        <begin position="249"/>
        <end position="250"/>
    </location>
    <ligand>
        <name>substrate</name>
    </ligand>
</feature>
<feature type="binding site" evidence="1">
    <location>
        <position position="271"/>
    </location>
    <ligand>
        <name>FMN</name>
        <dbReference type="ChEBI" id="CHEBI:58210"/>
    </ligand>
</feature>
<feature type="binding site" evidence="1">
    <location>
        <position position="300"/>
    </location>
    <ligand>
        <name>FMN</name>
        <dbReference type="ChEBI" id="CHEBI:58210"/>
    </ligand>
</feature>
<feature type="binding site" evidence="1">
    <location>
        <begin position="321"/>
        <end position="322"/>
    </location>
    <ligand>
        <name>FMN</name>
        <dbReference type="ChEBI" id="CHEBI:58210"/>
    </ligand>
</feature>
<evidence type="ECO:0000255" key="1">
    <source>
        <dbReference type="HAMAP-Rule" id="MF_00225"/>
    </source>
</evidence>
<reference key="1">
    <citation type="journal article" date="2009" name="BMC Genomics">
        <title>Metabolic analysis of the soil microbe Dechloromonas aromatica str. RCB: indications of a surprisingly complex life-style and cryptic anaerobic pathways for aromatic degradation.</title>
        <authorList>
            <person name="Salinero K.K."/>
            <person name="Keller K."/>
            <person name="Feil W.S."/>
            <person name="Feil H."/>
            <person name="Trong S."/>
            <person name="Di Bartolo G."/>
            <person name="Lapidus A."/>
        </authorList>
    </citation>
    <scope>NUCLEOTIDE SEQUENCE [LARGE SCALE GENOMIC DNA]</scope>
    <source>
        <strain>RCB</strain>
    </source>
</reference>
<proteinExistence type="inferred from homology"/>
<accession>Q47GW1</accession>
<gene>
    <name evidence="1" type="primary">pyrD</name>
    <name type="ordered locus">Daro_1164</name>
</gene>
<sequence>MLYPLIRKFFFSLDAETAHGIGMKGIDLMNAAGLACAVAKPVAACPVEVMGLKFPNPVGLAAGLDKNGDHIDGLAKLGFGFIEIGTITPRPQDGNPKPRLFRIPEAQGIINRMGFNNAGVDKLLENVRAAEFPKKGGILGINIGKNATTPIEKAADDYLICLDKVYNDASYVTVNISSPNTKNLRELQKDEALDDLLAQLKAKQLQLAEQYGKYVPMALKIAPDLDDEQITAIADALRRHRFDAVIATNTTLSREGVEGMPNATETGGLSGKPVFEKSTAVQKKLSIALAGELPIIGVGGIMGGEDAAEKIRAGASLVQFYSGFIYRGPDLVSEVAETLAHVMRKSV</sequence>
<keyword id="KW-1003">Cell membrane</keyword>
<keyword id="KW-0285">Flavoprotein</keyword>
<keyword id="KW-0288">FMN</keyword>
<keyword id="KW-0472">Membrane</keyword>
<keyword id="KW-0560">Oxidoreductase</keyword>
<keyword id="KW-0665">Pyrimidine biosynthesis</keyword>
<dbReference type="EC" id="1.3.5.2" evidence="1"/>
<dbReference type="EMBL" id="CP000089">
    <property type="protein sequence ID" value="AAZ45920.1"/>
    <property type="molecule type" value="Genomic_DNA"/>
</dbReference>
<dbReference type="SMR" id="Q47GW1"/>
<dbReference type="STRING" id="159087.Daro_1164"/>
<dbReference type="KEGG" id="dar:Daro_1164"/>
<dbReference type="eggNOG" id="COG0167">
    <property type="taxonomic scope" value="Bacteria"/>
</dbReference>
<dbReference type="HOGENOM" id="CLU_013640_2_0_4"/>
<dbReference type="OrthoDB" id="9802377at2"/>
<dbReference type="UniPathway" id="UPA00070">
    <property type="reaction ID" value="UER00946"/>
</dbReference>
<dbReference type="GO" id="GO:0005737">
    <property type="term" value="C:cytoplasm"/>
    <property type="evidence" value="ECO:0007669"/>
    <property type="project" value="InterPro"/>
</dbReference>
<dbReference type="GO" id="GO:0005886">
    <property type="term" value="C:plasma membrane"/>
    <property type="evidence" value="ECO:0007669"/>
    <property type="project" value="UniProtKB-SubCell"/>
</dbReference>
<dbReference type="GO" id="GO:0106430">
    <property type="term" value="F:dihydroorotate dehydrogenase (quinone) activity"/>
    <property type="evidence" value="ECO:0007669"/>
    <property type="project" value="UniProtKB-EC"/>
</dbReference>
<dbReference type="GO" id="GO:0006207">
    <property type="term" value="P:'de novo' pyrimidine nucleobase biosynthetic process"/>
    <property type="evidence" value="ECO:0007669"/>
    <property type="project" value="InterPro"/>
</dbReference>
<dbReference type="GO" id="GO:0044205">
    <property type="term" value="P:'de novo' UMP biosynthetic process"/>
    <property type="evidence" value="ECO:0007669"/>
    <property type="project" value="UniProtKB-UniRule"/>
</dbReference>
<dbReference type="CDD" id="cd04738">
    <property type="entry name" value="DHOD_2_like"/>
    <property type="match status" value="1"/>
</dbReference>
<dbReference type="FunFam" id="3.20.20.70:FF:000028">
    <property type="entry name" value="Dihydroorotate dehydrogenase (quinone)"/>
    <property type="match status" value="1"/>
</dbReference>
<dbReference type="Gene3D" id="3.20.20.70">
    <property type="entry name" value="Aldolase class I"/>
    <property type="match status" value="1"/>
</dbReference>
<dbReference type="HAMAP" id="MF_00225">
    <property type="entry name" value="DHO_dh_type2"/>
    <property type="match status" value="1"/>
</dbReference>
<dbReference type="InterPro" id="IPR013785">
    <property type="entry name" value="Aldolase_TIM"/>
</dbReference>
<dbReference type="InterPro" id="IPR050074">
    <property type="entry name" value="DHO_dehydrogenase"/>
</dbReference>
<dbReference type="InterPro" id="IPR012135">
    <property type="entry name" value="Dihydroorotate_DH_1_2"/>
</dbReference>
<dbReference type="InterPro" id="IPR005719">
    <property type="entry name" value="Dihydroorotate_DH_2"/>
</dbReference>
<dbReference type="InterPro" id="IPR005720">
    <property type="entry name" value="Dihydroorotate_DH_cat"/>
</dbReference>
<dbReference type="InterPro" id="IPR001295">
    <property type="entry name" value="Dihydroorotate_DH_CS"/>
</dbReference>
<dbReference type="NCBIfam" id="NF003644">
    <property type="entry name" value="PRK05286.1-1"/>
    <property type="match status" value="1"/>
</dbReference>
<dbReference type="NCBIfam" id="NF003645">
    <property type="entry name" value="PRK05286.1-2"/>
    <property type="match status" value="1"/>
</dbReference>
<dbReference type="NCBIfam" id="NF003646">
    <property type="entry name" value="PRK05286.1-4"/>
    <property type="match status" value="1"/>
</dbReference>
<dbReference type="NCBIfam" id="NF003652">
    <property type="entry name" value="PRK05286.2-5"/>
    <property type="match status" value="1"/>
</dbReference>
<dbReference type="NCBIfam" id="TIGR01036">
    <property type="entry name" value="pyrD_sub2"/>
    <property type="match status" value="1"/>
</dbReference>
<dbReference type="PANTHER" id="PTHR48109:SF4">
    <property type="entry name" value="DIHYDROOROTATE DEHYDROGENASE (QUINONE), MITOCHONDRIAL"/>
    <property type="match status" value="1"/>
</dbReference>
<dbReference type="PANTHER" id="PTHR48109">
    <property type="entry name" value="DIHYDROOROTATE DEHYDROGENASE (QUINONE), MITOCHONDRIAL-RELATED"/>
    <property type="match status" value="1"/>
</dbReference>
<dbReference type="Pfam" id="PF01180">
    <property type="entry name" value="DHO_dh"/>
    <property type="match status" value="1"/>
</dbReference>
<dbReference type="PIRSF" id="PIRSF000164">
    <property type="entry name" value="DHO_oxidase"/>
    <property type="match status" value="1"/>
</dbReference>
<dbReference type="SUPFAM" id="SSF51395">
    <property type="entry name" value="FMN-linked oxidoreductases"/>
    <property type="match status" value="1"/>
</dbReference>
<dbReference type="PROSITE" id="PS00911">
    <property type="entry name" value="DHODEHASE_1"/>
    <property type="match status" value="1"/>
</dbReference>
<dbReference type="PROSITE" id="PS00912">
    <property type="entry name" value="DHODEHASE_2"/>
    <property type="match status" value="1"/>
</dbReference>
<protein>
    <recommendedName>
        <fullName evidence="1">Dihydroorotate dehydrogenase (quinone)</fullName>
        <ecNumber evidence="1">1.3.5.2</ecNumber>
    </recommendedName>
    <alternativeName>
        <fullName evidence="1">DHOdehase</fullName>
        <shortName evidence="1">DHOD</shortName>
        <shortName evidence="1">DHODase</shortName>
    </alternativeName>
    <alternativeName>
        <fullName evidence="1">Dihydroorotate oxidase</fullName>
    </alternativeName>
</protein>
<name>PYRD_DECAR</name>